<keyword id="KW-1185">Reference proteome</keyword>
<reference key="1">
    <citation type="journal article" date="2003" name="Nature">
        <title>The genome sequence of Bacillus anthracis Ames and comparison to closely related bacteria.</title>
        <authorList>
            <person name="Read T.D."/>
            <person name="Peterson S.N."/>
            <person name="Tourasse N.J."/>
            <person name="Baillie L.W."/>
            <person name="Paulsen I.T."/>
            <person name="Nelson K.E."/>
            <person name="Tettelin H."/>
            <person name="Fouts D.E."/>
            <person name="Eisen J.A."/>
            <person name="Gill S.R."/>
            <person name="Holtzapple E.K."/>
            <person name="Okstad O.A."/>
            <person name="Helgason E."/>
            <person name="Rilstone J."/>
            <person name="Wu M."/>
            <person name="Kolonay J.F."/>
            <person name="Beanan M.J."/>
            <person name="Dodson R.J."/>
            <person name="Brinkac L.M."/>
            <person name="Gwinn M.L."/>
            <person name="DeBoy R.T."/>
            <person name="Madpu R."/>
            <person name="Daugherty S.C."/>
            <person name="Durkin A.S."/>
            <person name="Haft D.H."/>
            <person name="Nelson W.C."/>
            <person name="Peterson J.D."/>
            <person name="Pop M."/>
            <person name="Khouri H.M."/>
            <person name="Radune D."/>
            <person name="Benton J.L."/>
            <person name="Mahamoud Y."/>
            <person name="Jiang L."/>
            <person name="Hance I.R."/>
            <person name="Weidman J.F."/>
            <person name="Berry K.J."/>
            <person name="Plaut R.D."/>
            <person name="Wolf A.M."/>
            <person name="Watkins K.L."/>
            <person name="Nierman W.C."/>
            <person name="Hazen A."/>
            <person name="Cline R.T."/>
            <person name="Redmond C."/>
            <person name="Thwaite J.E."/>
            <person name="White O."/>
            <person name="Salzberg S.L."/>
            <person name="Thomason B."/>
            <person name="Friedlander A.M."/>
            <person name="Koehler T.M."/>
            <person name="Hanna P.C."/>
            <person name="Kolstoe A.-B."/>
            <person name="Fraser C.M."/>
        </authorList>
    </citation>
    <scope>NUCLEOTIDE SEQUENCE [LARGE SCALE GENOMIC DNA]</scope>
    <source>
        <strain>Ames / isolate Porton</strain>
    </source>
</reference>
<reference key="2">
    <citation type="journal article" date="2009" name="J. Bacteriol.">
        <title>The complete genome sequence of Bacillus anthracis Ames 'Ancestor'.</title>
        <authorList>
            <person name="Ravel J."/>
            <person name="Jiang L."/>
            <person name="Stanley S.T."/>
            <person name="Wilson M.R."/>
            <person name="Decker R.S."/>
            <person name="Read T.D."/>
            <person name="Worsham P."/>
            <person name="Keim P.S."/>
            <person name="Salzberg S.L."/>
            <person name="Fraser-Liggett C.M."/>
            <person name="Rasko D.A."/>
        </authorList>
    </citation>
    <scope>NUCLEOTIDE SEQUENCE [LARGE SCALE GENOMIC DNA]</scope>
    <source>
        <strain>Ames ancestor</strain>
    </source>
</reference>
<reference key="3">
    <citation type="submission" date="2004-01" db="EMBL/GenBank/DDBJ databases">
        <title>Complete genome sequence of Bacillus anthracis Sterne.</title>
        <authorList>
            <person name="Brettin T.S."/>
            <person name="Bruce D."/>
            <person name="Challacombe J.F."/>
            <person name="Gilna P."/>
            <person name="Han C."/>
            <person name="Hill K."/>
            <person name="Hitchcock P."/>
            <person name="Jackson P."/>
            <person name="Keim P."/>
            <person name="Longmire J."/>
            <person name="Lucas S."/>
            <person name="Okinaka R."/>
            <person name="Richardson P."/>
            <person name="Rubin E."/>
            <person name="Tice H."/>
        </authorList>
    </citation>
    <scope>NUCLEOTIDE SEQUENCE [LARGE SCALE GENOMIC DNA]</scope>
    <source>
        <strain>Sterne</strain>
    </source>
</reference>
<organism>
    <name type="scientific">Bacillus anthracis</name>
    <dbReference type="NCBI Taxonomy" id="1392"/>
    <lineage>
        <taxon>Bacteria</taxon>
        <taxon>Bacillati</taxon>
        <taxon>Bacillota</taxon>
        <taxon>Bacilli</taxon>
        <taxon>Bacillales</taxon>
        <taxon>Bacillaceae</taxon>
        <taxon>Bacillus</taxon>
        <taxon>Bacillus cereus group</taxon>
    </lineage>
</organism>
<accession>Q81R83</accession>
<accession>Q6HZF6</accession>
<accession>Q6KTE5</accession>
<gene>
    <name type="ordered locus">BA_2173</name>
    <name type="ordered locus">GBAA_2173</name>
    <name type="ordered locus">BAS2019</name>
</gene>
<feature type="chain" id="PRO_0000271973" description="Bacilliredoxin BA_2173/GBAA_2173/BAS2019">
    <location>
        <begin position="1"/>
        <end position="144"/>
    </location>
</feature>
<protein>
    <recommendedName>
        <fullName evidence="1">Bacilliredoxin BA_2173/GBAA_2173/BAS2019</fullName>
    </recommendedName>
</protein>
<dbReference type="EMBL" id="AE016879">
    <property type="protein sequence ID" value="AAP26052.1"/>
    <property type="molecule type" value="Genomic_DNA"/>
</dbReference>
<dbReference type="EMBL" id="AE017334">
    <property type="protein sequence ID" value="AAT31291.1"/>
    <property type="molecule type" value="Genomic_DNA"/>
</dbReference>
<dbReference type="EMBL" id="AE017225">
    <property type="protein sequence ID" value="AAT54333.1"/>
    <property type="molecule type" value="Genomic_DNA"/>
</dbReference>
<dbReference type="RefSeq" id="NP_844566.1">
    <property type="nucleotide sequence ID" value="NC_003997.3"/>
</dbReference>
<dbReference type="RefSeq" id="WP_000063712.1">
    <property type="nucleotide sequence ID" value="NZ_WXXJ01000026.1"/>
</dbReference>
<dbReference type="RefSeq" id="YP_028282.1">
    <property type="nucleotide sequence ID" value="NC_005945.1"/>
</dbReference>
<dbReference type="SMR" id="Q81R83"/>
<dbReference type="IntAct" id="Q81R83">
    <property type="interactions" value="10"/>
</dbReference>
<dbReference type="STRING" id="261594.GBAA_2173"/>
<dbReference type="DNASU" id="1085740"/>
<dbReference type="KEGG" id="ban:BA_2173"/>
<dbReference type="KEGG" id="bar:GBAA_2173"/>
<dbReference type="KEGG" id="bat:BAS2019"/>
<dbReference type="PATRIC" id="fig|198094.11.peg.2142"/>
<dbReference type="eggNOG" id="ENOG502ZBVN">
    <property type="taxonomic scope" value="Bacteria"/>
</dbReference>
<dbReference type="HOGENOM" id="CLU_132521_0_0_9"/>
<dbReference type="OMA" id="QDICMDI"/>
<dbReference type="OrthoDB" id="9793981at2"/>
<dbReference type="Proteomes" id="UP000000427">
    <property type="component" value="Chromosome"/>
</dbReference>
<dbReference type="Proteomes" id="UP000000594">
    <property type="component" value="Chromosome"/>
</dbReference>
<dbReference type="GO" id="GO:0045454">
    <property type="term" value="P:cell redox homeostasis"/>
    <property type="evidence" value="ECO:0000250"/>
    <property type="project" value="UniProtKB"/>
</dbReference>
<dbReference type="Gene3D" id="6.10.250.2150">
    <property type="match status" value="1"/>
</dbReference>
<dbReference type="Gene3D" id="3.40.30.10">
    <property type="entry name" value="Glutaredoxin"/>
    <property type="match status" value="1"/>
</dbReference>
<dbReference type="InterPro" id="IPR009474">
    <property type="entry name" value="BrxB/BrxA"/>
</dbReference>
<dbReference type="NCBIfam" id="TIGR04191">
    <property type="entry name" value="YphP_YqiW"/>
    <property type="match status" value="1"/>
</dbReference>
<dbReference type="PANTHER" id="PTHR40052:SF2">
    <property type="entry name" value="BACILLIREDOXIN BRXA"/>
    <property type="match status" value="1"/>
</dbReference>
<dbReference type="PANTHER" id="PTHR40052">
    <property type="entry name" value="UPF0403 PROTEIN YQIW-RELATED"/>
    <property type="match status" value="1"/>
</dbReference>
<dbReference type="Pfam" id="PF06491">
    <property type="entry name" value="Disulph_isomer"/>
    <property type="match status" value="1"/>
</dbReference>
<sequence>MSNAYEEYMRQMVIPMRQELVRSGFEELTTEEAVTEFMENTTGTTLVVVNSVCGCAAGLARPSAGQAVVRAEKQPDHLVTVFAGQDKDATAKMREYFGEIPPSSPSMALLKGKEVVHFIHRHEIEGATMDEIITNLEQAFEKNC</sequence>
<proteinExistence type="inferred from homology"/>
<evidence type="ECO:0000305" key="1"/>
<name>Y2173_BACAN</name>
<comment type="similarity">
    <text evidence="1">Belongs to the bacilliredoxin family.</text>
</comment>